<reference key="1">
    <citation type="journal article" date="2005" name="Science">
        <title>The transcriptional landscape of the mammalian genome.</title>
        <authorList>
            <person name="Carninci P."/>
            <person name="Kasukawa T."/>
            <person name="Katayama S."/>
            <person name="Gough J."/>
            <person name="Frith M.C."/>
            <person name="Maeda N."/>
            <person name="Oyama R."/>
            <person name="Ravasi T."/>
            <person name="Lenhard B."/>
            <person name="Wells C."/>
            <person name="Kodzius R."/>
            <person name="Shimokawa K."/>
            <person name="Bajic V.B."/>
            <person name="Brenner S.E."/>
            <person name="Batalov S."/>
            <person name="Forrest A.R."/>
            <person name="Zavolan M."/>
            <person name="Davis M.J."/>
            <person name="Wilming L.G."/>
            <person name="Aidinis V."/>
            <person name="Allen J.E."/>
            <person name="Ambesi-Impiombato A."/>
            <person name="Apweiler R."/>
            <person name="Aturaliya R.N."/>
            <person name="Bailey T.L."/>
            <person name="Bansal M."/>
            <person name="Baxter L."/>
            <person name="Beisel K.W."/>
            <person name="Bersano T."/>
            <person name="Bono H."/>
            <person name="Chalk A.M."/>
            <person name="Chiu K.P."/>
            <person name="Choudhary V."/>
            <person name="Christoffels A."/>
            <person name="Clutterbuck D.R."/>
            <person name="Crowe M.L."/>
            <person name="Dalla E."/>
            <person name="Dalrymple B.P."/>
            <person name="de Bono B."/>
            <person name="Della Gatta G."/>
            <person name="di Bernardo D."/>
            <person name="Down T."/>
            <person name="Engstrom P."/>
            <person name="Fagiolini M."/>
            <person name="Faulkner G."/>
            <person name="Fletcher C.F."/>
            <person name="Fukushima T."/>
            <person name="Furuno M."/>
            <person name="Futaki S."/>
            <person name="Gariboldi M."/>
            <person name="Georgii-Hemming P."/>
            <person name="Gingeras T.R."/>
            <person name="Gojobori T."/>
            <person name="Green R.E."/>
            <person name="Gustincich S."/>
            <person name="Harbers M."/>
            <person name="Hayashi Y."/>
            <person name="Hensch T.K."/>
            <person name="Hirokawa N."/>
            <person name="Hill D."/>
            <person name="Huminiecki L."/>
            <person name="Iacono M."/>
            <person name="Ikeo K."/>
            <person name="Iwama A."/>
            <person name="Ishikawa T."/>
            <person name="Jakt M."/>
            <person name="Kanapin A."/>
            <person name="Katoh M."/>
            <person name="Kawasawa Y."/>
            <person name="Kelso J."/>
            <person name="Kitamura H."/>
            <person name="Kitano H."/>
            <person name="Kollias G."/>
            <person name="Krishnan S.P."/>
            <person name="Kruger A."/>
            <person name="Kummerfeld S.K."/>
            <person name="Kurochkin I.V."/>
            <person name="Lareau L.F."/>
            <person name="Lazarevic D."/>
            <person name="Lipovich L."/>
            <person name="Liu J."/>
            <person name="Liuni S."/>
            <person name="McWilliam S."/>
            <person name="Madan Babu M."/>
            <person name="Madera M."/>
            <person name="Marchionni L."/>
            <person name="Matsuda H."/>
            <person name="Matsuzawa S."/>
            <person name="Miki H."/>
            <person name="Mignone F."/>
            <person name="Miyake S."/>
            <person name="Morris K."/>
            <person name="Mottagui-Tabar S."/>
            <person name="Mulder N."/>
            <person name="Nakano N."/>
            <person name="Nakauchi H."/>
            <person name="Ng P."/>
            <person name="Nilsson R."/>
            <person name="Nishiguchi S."/>
            <person name="Nishikawa S."/>
            <person name="Nori F."/>
            <person name="Ohara O."/>
            <person name="Okazaki Y."/>
            <person name="Orlando V."/>
            <person name="Pang K.C."/>
            <person name="Pavan W.J."/>
            <person name="Pavesi G."/>
            <person name="Pesole G."/>
            <person name="Petrovsky N."/>
            <person name="Piazza S."/>
            <person name="Reed J."/>
            <person name="Reid J.F."/>
            <person name="Ring B.Z."/>
            <person name="Ringwald M."/>
            <person name="Rost B."/>
            <person name="Ruan Y."/>
            <person name="Salzberg S.L."/>
            <person name="Sandelin A."/>
            <person name="Schneider C."/>
            <person name="Schoenbach C."/>
            <person name="Sekiguchi K."/>
            <person name="Semple C.A."/>
            <person name="Seno S."/>
            <person name="Sessa L."/>
            <person name="Sheng Y."/>
            <person name="Shibata Y."/>
            <person name="Shimada H."/>
            <person name="Shimada K."/>
            <person name="Silva D."/>
            <person name="Sinclair B."/>
            <person name="Sperling S."/>
            <person name="Stupka E."/>
            <person name="Sugiura K."/>
            <person name="Sultana R."/>
            <person name="Takenaka Y."/>
            <person name="Taki K."/>
            <person name="Tammoja K."/>
            <person name="Tan S.L."/>
            <person name="Tang S."/>
            <person name="Taylor M.S."/>
            <person name="Tegner J."/>
            <person name="Teichmann S.A."/>
            <person name="Ueda H.R."/>
            <person name="van Nimwegen E."/>
            <person name="Verardo R."/>
            <person name="Wei C.L."/>
            <person name="Yagi K."/>
            <person name="Yamanishi H."/>
            <person name="Zabarovsky E."/>
            <person name="Zhu S."/>
            <person name="Zimmer A."/>
            <person name="Hide W."/>
            <person name="Bult C."/>
            <person name="Grimmond S.M."/>
            <person name="Teasdale R.D."/>
            <person name="Liu E.T."/>
            <person name="Brusic V."/>
            <person name="Quackenbush J."/>
            <person name="Wahlestedt C."/>
            <person name="Mattick J.S."/>
            <person name="Hume D.A."/>
            <person name="Kai C."/>
            <person name="Sasaki D."/>
            <person name="Tomaru Y."/>
            <person name="Fukuda S."/>
            <person name="Kanamori-Katayama M."/>
            <person name="Suzuki M."/>
            <person name="Aoki J."/>
            <person name="Arakawa T."/>
            <person name="Iida J."/>
            <person name="Imamura K."/>
            <person name="Itoh M."/>
            <person name="Kato T."/>
            <person name="Kawaji H."/>
            <person name="Kawagashira N."/>
            <person name="Kawashima T."/>
            <person name="Kojima M."/>
            <person name="Kondo S."/>
            <person name="Konno H."/>
            <person name="Nakano K."/>
            <person name="Ninomiya N."/>
            <person name="Nishio T."/>
            <person name="Okada M."/>
            <person name="Plessy C."/>
            <person name="Shibata K."/>
            <person name="Shiraki T."/>
            <person name="Suzuki S."/>
            <person name="Tagami M."/>
            <person name="Waki K."/>
            <person name="Watahiki A."/>
            <person name="Okamura-Oho Y."/>
            <person name="Suzuki H."/>
            <person name="Kawai J."/>
            <person name="Hayashizaki Y."/>
        </authorList>
    </citation>
    <scope>NUCLEOTIDE SEQUENCE [LARGE SCALE MRNA] (ISOFORM 2)</scope>
    <scope>NUCLEOTIDE SEQUENCE [LARGE SCALE MRNA] OF 460-1041 (ISOFORM 1)</scope>
    <source>
        <strain>C57BL/6J</strain>
        <tissue>Cerebellum</tissue>
        <tissue>Thymus</tissue>
    </source>
</reference>
<reference key="2">
    <citation type="journal article" date="2004" name="Genome Res.">
        <title>The status, quality, and expansion of the NIH full-length cDNA project: the Mammalian Gene Collection (MGC).</title>
        <authorList>
            <consortium name="The MGC Project Team"/>
        </authorList>
    </citation>
    <scope>NUCLEOTIDE SEQUENCE [LARGE SCALE MRNA] (ISOFORM 1)</scope>
    <source>
        <strain>C57BL/6J</strain>
        <strain>Czech II</strain>
        <tissue>Brain</tissue>
        <tissue>Mammary tumor</tissue>
    </source>
</reference>
<reference key="3">
    <citation type="journal article" date="2010" name="Cell">
        <title>A tissue-specific atlas of mouse protein phosphorylation and expression.</title>
        <authorList>
            <person name="Huttlin E.L."/>
            <person name="Jedrychowski M.P."/>
            <person name="Elias J.E."/>
            <person name="Goswami T."/>
            <person name="Rad R."/>
            <person name="Beausoleil S.A."/>
            <person name="Villen J."/>
            <person name="Haas W."/>
            <person name="Sowa M.E."/>
            <person name="Gygi S.P."/>
        </authorList>
    </citation>
    <scope>PHOSPHORYLATION [LARGE SCALE ANALYSIS] AT SER-500 AND SER-535</scope>
    <scope>IDENTIFICATION BY MASS SPECTROMETRY [LARGE SCALE ANALYSIS]</scope>
    <source>
        <tissue>Brain</tissue>
        <tissue>Brown adipose tissue</tissue>
        <tissue>Heart</tissue>
        <tissue>Kidney</tissue>
        <tissue>Liver</tissue>
        <tissue>Lung</tissue>
        <tissue>Pancreas</tissue>
        <tissue>Spleen</tissue>
        <tissue>Testis</tissue>
    </source>
</reference>
<dbReference type="EMBL" id="AK040147">
    <property type="protein sequence ID" value="BAC30523.1"/>
    <property type="molecule type" value="mRNA"/>
</dbReference>
<dbReference type="EMBL" id="AK043206">
    <property type="protein sequence ID" value="BAC31492.1"/>
    <property type="status" value="ALT_INIT"/>
    <property type="molecule type" value="mRNA"/>
</dbReference>
<dbReference type="EMBL" id="BC003209">
    <property type="protein sequence ID" value="AAH03209.2"/>
    <property type="molecule type" value="mRNA"/>
</dbReference>
<dbReference type="EMBL" id="BC055344">
    <property type="protein sequence ID" value="AAH55344.1"/>
    <property type="molecule type" value="mRNA"/>
</dbReference>
<dbReference type="CCDS" id="CCDS17528.1">
    <molecule id="Q7TPD0-1"/>
</dbReference>
<dbReference type="RefSeq" id="NP_663515.2">
    <molecule id="Q7TPD0-1"/>
    <property type="nucleotide sequence ID" value="NM_145540.3"/>
</dbReference>
<dbReference type="RefSeq" id="NP_849207.2">
    <molecule id="Q7TPD0-1"/>
    <property type="nucleotide sequence ID" value="NM_178876.3"/>
</dbReference>
<dbReference type="SMR" id="Q7TPD0"/>
<dbReference type="BioGRID" id="230859">
    <property type="interactions" value="11"/>
</dbReference>
<dbReference type="ComplexPortal" id="CPX-613">
    <property type="entry name" value="SOSS1 complex"/>
</dbReference>
<dbReference type="ComplexPortal" id="CPX-615">
    <property type="entry name" value="SOSS2 complex"/>
</dbReference>
<dbReference type="DIP" id="DIP-59970N"/>
<dbReference type="FunCoup" id="Q7TPD0">
    <property type="interactions" value="4303"/>
</dbReference>
<dbReference type="IntAct" id="Q7TPD0">
    <property type="interactions" value="2"/>
</dbReference>
<dbReference type="STRING" id="10090.ENSMUSP00000029542"/>
<dbReference type="GlyGen" id="Q7TPD0">
    <property type="glycosylation" value="1 site, 1 O-linked glycan (1 site)"/>
</dbReference>
<dbReference type="iPTMnet" id="Q7TPD0"/>
<dbReference type="PhosphoSitePlus" id="Q7TPD0"/>
<dbReference type="jPOST" id="Q7TPD0"/>
<dbReference type="PaxDb" id="10090-ENSMUSP00000029542"/>
<dbReference type="PeptideAtlas" id="Q7TPD0"/>
<dbReference type="ProteomicsDB" id="269067">
    <molecule id="Q7TPD0-1"/>
</dbReference>
<dbReference type="ProteomicsDB" id="269068">
    <molecule id="Q7TPD0-2"/>
</dbReference>
<dbReference type="Pumba" id="Q7TPD0"/>
<dbReference type="Antibodypedia" id="34136">
    <property type="antibodies" value="98 antibodies from 20 providers"/>
</dbReference>
<dbReference type="DNASU" id="229543"/>
<dbReference type="Ensembl" id="ENSMUST00000029542.12">
    <molecule id="Q7TPD0-1"/>
    <property type="protein sequence ID" value="ENSMUSP00000029542.6"/>
    <property type="gene ID" value="ENSMUSG00000027933.12"/>
</dbReference>
<dbReference type="Ensembl" id="ENSMUST00000071488.8">
    <molecule id="Q7TPD0-1"/>
    <property type="protein sequence ID" value="ENSMUSP00000071422.4"/>
    <property type="gene ID" value="ENSMUSG00000027933.12"/>
</dbReference>
<dbReference type="GeneID" id="229543"/>
<dbReference type="KEGG" id="mmu:229543"/>
<dbReference type="UCSC" id="uc008qcd.2">
    <molecule id="Q7TPD0-1"/>
    <property type="organism name" value="mouse"/>
</dbReference>
<dbReference type="UCSC" id="uc008qcf.1">
    <molecule id="Q7TPD0-2"/>
    <property type="organism name" value="mouse"/>
</dbReference>
<dbReference type="AGR" id="MGI:2140050"/>
<dbReference type="CTD" id="65123"/>
<dbReference type="MGI" id="MGI:2140050">
    <property type="gene designation" value="Ints3"/>
</dbReference>
<dbReference type="VEuPathDB" id="HostDB:ENSMUSG00000027933"/>
<dbReference type="eggNOG" id="KOG4262">
    <property type="taxonomic scope" value="Eukaryota"/>
</dbReference>
<dbReference type="GeneTree" id="ENSGT00390000014184"/>
<dbReference type="HOGENOM" id="CLU_007659_0_0_1"/>
<dbReference type="InParanoid" id="Q7TPD0"/>
<dbReference type="OMA" id="FEQYCLW"/>
<dbReference type="OrthoDB" id="2021145at2759"/>
<dbReference type="PhylomeDB" id="Q7TPD0"/>
<dbReference type="TreeFam" id="TF323623"/>
<dbReference type="Reactome" id="R-MMU-6807505">
    <property type="pathway name" value="RNA polymerase II transcribes snRNA genes"/>
</dbReference>
<dbReference type="BioGRID-ORCS" id="229543">
    <property type="hits" value="27 hits in 112 CRISPR screens"/>
</dbReference>
<dbReference type="ChiTaRS" id="Ints3">
    <property type="organism name" value="mouse"/>
</dbReference>
<dbReference type="PRO" id="PR:Q7TPD0"/>
<dbReference type="Proteomes" id="UP000000589">
    <property type="component" value="Chromosome 3"/>
</dbReference>
<dbReference type="RNAct" id="Q7TPD0">
    <property type="molecule type" value="protein"/>
</dbReference>
<dbReference type="Bgee" id="ENSMUSG00000027933">
    <property type="expression patterns" value="Expressed in embryonic post-anal tail and 264 other cell types or tissues"/>
</dbReference>
<dbReference type="ExpressionAtlas" id="Q7TPD0">
    <property type="expression patterns" value="baseline and differential"/>
</dbReference>
<dbReference type="GO" id="GO:0005737">
    <property type="term" value="C:cytoplasm"/>
    <property type="evidence" value="ECO:0000250"/>
    <property type="project" value="UniProtKB"/>
</dbReference>
<dbReference type="GO" id="GO:0160232">
    <property type="term" value="C:INTAC complex"/>
    <property type="evidence" value="ECO:0000250"/>
    <property type="project" value="UniProtKB"/>
</dbReference>
<dbReference type="GO" id="GO:0032039">
    <property type="term" value="C:integrator complex"/>
    <property type="evidence" value="ECO:0000250"/>
    <property type="project" value="HGNC-UCL"/>
</dbReference>
<dbReference type="GO" id="GO:0005634">
    <property type="term" value="C:nucleus"/>
    <property type="evidence" value="ECO:0000250"/>
    <property type="project" value="UniProtKB"/>
</dbReference>
<dbReference type="GO" id="GO:0035861">
    <property type="term" value="C:site of double-strand break"/>
    <property type="evidence" value="ECO:0007669"/>
    <property type="project" value="Ensembl"/>
</dbReference>
<dbReference type="GO" id="GO:0070876">
    <property type="term" value="C:SOSS complex"/>
    <property type="evidence" value="ECO:0000250"/>
    <property type="project" value="UniProtKB"/>
</dbReference>
<dbReference type="GO" id="GO:0006974">
    <property type="term" value="P:DNA damage response"/>
    <property type="evidence" value="ECO:0000250"/>
    <property type="project" value="UniProtKB"/>
</dbReference>
<dbReference type="GO" id="GO:0006281">
    <property type="term" value="P:DNA repair"/>
    <property type="evidence" value="ECO:0000250"/>
    <property type="project" value="UniProtKB"/>
</dbReference>
<dbReference type="GO" id="GO:0000724">
    <property type="term" value="P:double-strand break repair via homologous recombination"/>
    <property type="evidence" value="ECO:0000266"/>
    <property type="project" value="ComplexPortal"/>
</dbReference>
<dbReference type="GO" id="GO:0044818">
    <property type="term" value="P:mitotic G2/M transition checkpoint"/>
    <property type="evidence" value="ECO:0000250"/>
    <property type="project" value="UniProtKB"/>
</dbReference>
<dbReference type="GO" id="GO:0010212">
    <property type="term" value="P:response to ionizing radiation"/>
    <property type="evidence" value="ECO:0000250"/>
    <property type="project" value="UniProtKB"/>
</dbReference>
<dbReference type="GO" id="GO:0160240">
    <property type="term" value="P:RNA polymerase II transcription initiation surveillance"/>
    <property type="evidence" value="ECO:0000250"/>
    <property type="project" value="UniProtKB"/>
</dbReference>
<dbReference type="GO" id="GO:0016180">
    <property type="term" value="P:snRNA processing"/>
    <property type="evidence" value="ECO:0000250"/>
    <property type="project" value="HGNC-UCL"/>
</dbReference>
<dbReference type="InterPro" id="IPR056518">
    <property type="entry name" value="HEAT_Ints3_C"/>
</dbReference>
<dbReference type="InterPro" id="IPR045334">
    <property type="entry name" value="INTS3"/>
</dbReference>
<dbReference type="InterPro" id="IPR019333">
    <property type="entry name" value="INTS3_N"/>
</dbReference>
<dbReference type="PANTHER" id="PTHR13587">
    <property type="entry name" value="INTEGRATOR COMPLEX SUBUNIT 3"/>
    <property type="match status" value="1"/>
</dbReference>
<dbReference type="PANTHER" id="PTHR13587:SF7">
    <property type="entry name" value="INTEGRATOR COMPLEX SUBUNIT 3"/>
    <property type="match status" value="1"/>
</dbReference>
<dbReference type="Pfam" id="PF24566">
    <property type="entry name" value="HEAT_Ints3_C"/>
    <property type="match status" value="1"/>
</dbReference>
<dbReference type="Pfam" id="PF10189">
    <property type="entry name" value="Ints3_N"/>
    <property type="match status" value="1"/>
</dbReference>
<organism>
    <name type="scientific">Mus musculus</name>
    <name type="common">Mouse</name>
    <dbReference type="NCBI Taxonomy" id="10090"/>
    <lineage>
        <taxon>Eukaryota</taxon>
        <taxon>Metazoa</taxon>
        <taxon>Chordata</taxon>
        <taxon>Craniata</taxon>
        <taxon>Vertebrata</taxon>
        <taxon>Euteleostomi</taxon>
        <taxon>Mammalia</taxon>
        <taxon>Eutheria</taxon>
        <taxon>Euarchontoglires</taxon>
        <taxon>Glires</taxon>
        <taxon>Rodentia</taxon>
        <taxon>Myomorpha</taxon>
        <taxon>Muroidea</taxon>
        <taxon>Muridae</taxon>
        <taxon>Murinae</taxon>
        <taxon>Mus</taxon>
        <taxon>Mus</taxon>
    </lineage>
</organism>
<keyword id="KW-0007">Acetylation</keyword>
<keyword id="KW-0025">Alternative splicing</keyword>
<keyword id="KW-0963">Cytoplasm</keyword>
<keyword id="KW-0227">DNA damage</keyword>
<keyword id="KW-0234">DNA repair</keyword>
<keyword id="KW-0539">Nucleus</keyword>
<keyword id="KW-0597">Phosphoprotein</keyword>
<keyword id="KW-1185">Reference proteome</keyword>
<comment type="function">
    <text evidence="1">Component of the integrator complex, a multiprotein complex that terminates RNA polymerase II (Pol II) transcription in the promoter-proximal region of genes. The integrator complex provides a quality checkpoint during transcription elongation by driving premature transcription termination of transcripts that are unfavorably configured for transcriptional elongation: the complex terminates transcription by (1) catalyzing dephosphorylation of the C-terminal domain (CTD) of Pol II subunit POLR2A/RPB1 and SUPT5H/SPT5, (2) degrading the exiting nascent RNA transcript via endonuclease activity and (3) promoting the release of Pol II from bound DNA. The integrator complex is also involved in terminating the synthesis of non-coding Pol II transcripts, such as enhancer RNAs (eRNAs), small nuclear RNAs (snRNAs), telomerase RNAs and long non-coding RNAs (lncRNAs). Within the integrator complex, INTS3 is involved in the post-termination step: INTS3 binds INTS7 in the open conformation of integrator complex and prevents the rebinding of Pol II to the integrator after termination cycle. Mediates recruitment of cytoplasmic dynein to the nuclear envelope, probably as component of the integrator complex.</text>
</comment>
<comment type="function">
    <text evidence="1">Component of the SOSS complex, a multiprotein complex that functions downstream of the MRN complex to promote DNA repair and G2/M checkpoint. The SOSS complex associates with single-stranded DNA at DNA lesions and influences diverse endpoints in the cellular DNA damage response including cell-cycle checkpoint activation, recombinational repair and maintenance of genomic stability. The SOSS complex is required for efficient homologous recombination-dependent repair of double-strand breaks (DSBs) and ATM-dependent signaling pathways. In the SOSS complex, it is required for the assembly of the complex and for stabilization of the complex at DNA damage sites.</text>
</comment>
<comment type="subunit">
    <text evidence="1">Component of the Integrator complex, composed of core subunits INTS1, INTS2, INTS3, INTS4, INTS5, INTS6, INTS7, INTS8, INTS9/RC74, INTS10, INTS11/CPSF3L, INTS12, INTS13, INTS14 and INTS15. The core complex associates with protein phosphatase 2A subunits PPP2CA and PPP2R1A, to form the Integrator-PP2A (INTAC) complex. Component of the SOSS complex, composed of SOSS-B (SOSS-B1/NABP2 or SOSS-B2/NABP1), SOSS-A/INTS3 and SOSS-C/INIP. SOSS complexes containing SOSS-B1/NABP2 are more abundant than complexes containing SOSS-B2/NABP1. Interacts with SOSS-B1/NABP2, SOSS-B2/NABP1 and SOSS-C/INIP; the interaction is direct. Interacts with NBN/NBS1.</text>
</comment>
<comment type="subcellular location">
    <subcellularLocation>
        <location evidence="1">Nucleus</location>
    </subcellularLocation>
    <subcellularLocation>
        <location evidence="1">Cytoplasm</location>
    </subcellularLocation>
    <text evidence="1">Localizes to nuclear foci following DNA damage.</text>
</comment>
<comment type="alternative products">
    <event type="alternative splicing"/>
    <isoform>
        <id>Q7TPD0-1</id>
        <name>1</name>
        <sequence type="displayed"/>
    </isoform>
    <isoform>
        <id>Q7TPD0-2</id>
        <name>2</name>
        <sequence type="described" ref="VSP_038133 VSP_038134"/>
    </isoform>
</comment>
<comment type="similarity">
    <text evidence="4">Belongs to the Integrator subunit 3 family.</text>
</comment>
<comment type="sequence caution" evidence="4">
    <conflict type="erroneous initiation">
        <sequence resource="EMBL-CDS" id="BAC31492"/>
    </conflict>
    <text>Truncated N-terminus.</text>
</comment>
<feature type="chain" id="PRO_0000259535" description="Integrator complex subunit 3">
    <location>
        <begin position="1"/>
        <end position="1041"/>
    </location>
</feature>
<feature type="region of interest" description="Disordered" evidence="2">
    <location>
        <begin position="975"/>
        <end position="1041"/>
    </location>
</feature>
<feature type="compositionally biased region" description="Acidic residues" evidence="2">
    <location>
        <begin position="1006"/>
        <end position="1020"/>
    </location>
</feature>
<feature type="modified residue" description="N-acetylmethionine" evidence="1">
    <location>
        <position position="1"/>
    </location>
</feature>
<feature type="modified residue" description="Phosphoserine" evidence="5">
    <location>
        <position position="500"/>
    </location>
</feature>
<feature type="modified residue" description="Phosphoserine" evidence="5">
    <location>
        <position position="535"/>
    </location>
</feature>
<feature type="modified residue" description="Phosphoserine" evidence="1">
    <location>
        <position position="993"/>
    </location>
</feature>
<feature type="splice variant" id="VSP_038133" description="In isoform 2." evidence="3">
    <original>FGQQKRYQDW</original>
    <variation>SSVHRRRSYR</variation>
    <location>
        <begin position="321"/>
        <end position="330"/>
    </location>
</feature>
<feature type="splice variant" id="VSP_038134" description="In isoform 2." evidence="3">
    <location>
        <begin position="331"/>
        <end position="1041"/>
    </location>
</feature>
<feature type="sequence conflict" description="In Ref. 1; BAC31492." evidence="4" ref="1">
    <original>H</original>
    <variation>P</variation>
    <location>
        <position position="553"/>
    </location>
</feature>
<feature type="sequence conflict" description="In Ref. 2; AAH55344." evidence="4" ref="2">
    <original>Q</original>
    <variation>H</variation>
    <location>
        <position position="948"/>
    </location>
</feature>
<protein>
    <recommendedName>
        <fullName>Integrator complex subunit 3</fullName>
        <shortName>Int3</shortName>
    </recommendedName>
    <alternativeName>
        <fullName>SOSS complex subunit A</fullName>
    </alternativeName>
    <alternativeName>
        <fullName>Sensor of single-strand DNA complex subunit A</fullName>
        <shortName>SOSS-A</shortName>
        <shortName>Sensor of ssDNA subunit A</shortName>
    </alternativeName>
</protein>
<evidence type="ECO:0000250" key="1">
    <source>
        <dbReference type="UniProtKB" id="Q68E01"/>
    </source>
</evidence>
<evidence type="ECO:0000256" key="2">
    <source>
        <dbReference type="SAM" id="MobiDB-lite"/>
    </source>
</evidence>
<evidence type="ECO:0000303" key="3">
    <source>
    </source>
</evidence>
<evidence type="ECO:0000305" key="4"/>
<evidence type="ECO:0007744" key="5">
    <source>
    </source>
</evidence>
<accession>Q7TPD0</accession>
<accession>A0A4X0</accession>
<accession>A0A4X3</accession>
<accession>Q99LK7</accession>
<gene>
    <name type="primary">Ints3</name>
</gene>
<sequence>MELQKGKGTVAAAASGAAGGGGGGAGAGAPGGGRLLLSTSLDAKDELEERLERCMSIVTSMTAGVSEREANDALNAYVCKGPPQHEEICLGLFTLVLTEPAQAQKCYRDLALVSRDGMNIVLNKINQLLMEKYLKLQDTCRTQLVWLVRELVKSGVLGADGVCMTFMKQIAGGDVTAKNIWLAESVLDILTEQREWVLKSSILIAMAVYTYLRLIVDHHGTAQLQTLRQKEVDFCISLLRERFMECLMIGRDLVRLLQNVARIPEFELLWKDIIHNPQALSPQFTGILQLLQSRTSRKFLACRLTPDMETKLLFMTSRVRFGQQKRYQDWFQRQYLSTPDSQSLRCDLIRYICGVVHPSNEVLSSDILPRWAIIGWLLTTCTSNVAASNAKLALFYDWLFFSPEKDSIMNIEPAILVMHHSMKPHPAITATLLDFMCRIIPNFYPPLEGHVRQGVFSSLNHIVEKRVLAHLAPLFDNPKLDKELRSMLREKFPEFCSSPSPPVEVKIEEPVSMEMDNHLSDKDESCYDNAEAAFSDDEEDLNSKGKKREFRFHPIKETVVEEPVDVTPYLDQLDESLRDKVLQLQKGSDTEAQCEVMQEIVDQVLEEDFDSEQLSVLASCLQELFKAHFRGEVLPEEVTEESLEESVGKPLYLIFRNLCQMQEDNSSFSLLLDLLSELYQKQPKIGYHLLYYLRASKAAAGKMNLYESFAQATQLGDLHTCLMMDMKACQEDDVRLLCHLTPSIYTEFPDETLRSGELLNMIVAVIDSAQLQELVCHVMMGNLVMFRKDSVLNILIQSLDWETFEQYCAWQLFLAHNIPLETIIPILQHLKYKEHPEALSCLLLQLRREKPSEEMVKMVLSRPCHPDDQFTTSILRHWCMKHDELLAEHIKALLIKNNSLPRKRQSLRSSSSKLAQLTLEQILEHLDNLRLNLANTKQNFFSQTPILQALQHVQASCDEAHKMKFSDLFSLAEEYEDSSTKPPKSRRKAALSSPRSRKNATQPPNAEEESGSSSASEEEDTKPKPTKRKRKGSSAVGSDSD</sequence>
<proteinExistence type="evidence at protein level"/>
<name>INT3_MOUSE</name>